<comment type="function">
    <text evidence="1">The edited BmKBTx-like may modulate voltage-gated sodium channels (Nav).</text>
</comment>
<comment type="function">
    <text evidence="1 7">The non-edited form is able to form a heterodimer (By similarity). In orthologs, a heterodimer with LVP beta-chain induces lipolysis in rat adipocytes, which is mediated through the beta-2 adrenergic receptor pathway (ADRB2) (By similarity). Since no LVP beta-chains have been identified in the venom of this scorpion, it is possible that this protein is not involved in a lipolysis process (Probable).</text>
</comment>
<comment type="subcellular location">
    <subcellularLocation>
        <location evidence="7">Secreted</location>
    </subcellularLocation>
</comment>
<comment type="tissue specificity">
    <text evidence="7">Expressed by the venom gland.</text>
</comment>
<comment type="domain">
    <text evidence="6">Has the structural arrangement of an alpha-helix connected to antiparallel beta-sheets by disulfide bonds (CS-alpha/beta).</text>
</comment>
<comment type="RNA editing">
    <location>
        <position position="81" evidence="2"/>
    </location>
    <text evidence="2">The stop codon (UGA) at position 81 is created by RNA editing.</text>
</comment>
<comment type="similarity">
    <text evidence="6">Belongs to the long (4 C-C) scorpion toxin superfamily.</text>
</comment>
<sequence>MKIGVLFTIISMLCLLEVRKICSKKEGGYPRYFSFGYKCQNWGTNEYCRTVCQLHKGEYGYCYAGDCYCEGLTEENRLFWNVYRKYCKNPLFD</sequence>
<feature type="signal peptide" evidence="3">
    <location>
        <begin position="1"/>
        <end position="23"/>
    </location>
</feature>
<feature type="chain" id="PRO_5031412909" description="Putative sodium channel toxin Ts41">
    <location>
        <begin position="24"/>
        <end position="93"/>
    </location>
</feature>
<feature type="domain" description="LCN-type CS-alpha/beta" evidence="4">
    <location>
        <begin position="26"/>
        <end position="88"/>
    </location>
</feature>
<feature type="disulfide bond" evidence="6">
    <location>
        <begin position="22"/>
        <end position="87"/>
    </location>
</feature>
<feature type="disulfide bond" evidence="4">
    <location>
        <begin position="39"/>
        <end position="62"/>
    </location>
</feature>
<feature type="disulfide bond" evidence="4">
    <location>
        <begin position="48"/>
        <end position="67"/>
    </location>
</feature>
<feature type="disulfide bond" evidence="4">
    <location>
        <begin position="52"/>
        <end position="69"/>
    </location>
</feature>
<proteinExistence type="inferred from homology"/>
<evidence type="ECO:0000250" key="1">
    <source>
        <dbReference type="UniProtKB" id="P84810"/>
    </source>
</evidence>
<evidence type="ECO:0000250" key="2">
    <source>
        <dbReference type="UniProtKB" id="Q6WJF5"/>
    </source>
</evidence>
<evidence type="ECO:0000255" key="3"/>
<evidence type="ECO:0000255" key="4">
    <source>
        <dbReference type="PROSITE-ProRule" id="PRU01210"/>
    </source>
</evidence>
<evidence type="ECO:0000303" key="5">
    <source>
    </source>
</evidence>
<evidence type="ECO:0000305" key="6"/>
<evidence type="ECO:0000305" key="7">
    <source>
    </source>
</evidence>
<evidence type="ECO:0000312" key="8">
    <source>
        <dbReference type="EMBL" id="QPD99032.1"/>
    </source>
</evidence>
<name>LVA41_TITSE</name>
<dbReference type="EMBL" id="MT081350">
    <property type="protein sequence ID" value="QPD99032.1"/>
    <property type="molecule type" value="mRNA"/>
</dbReference>
<dbReference type="SMR" id="A0A7S8MVN3"/>
<dbReference type="GO" id="GO:0005576">
    <property type="term" value="C:extracellular region"/>
    <property type="evidence" value="ECO:0007669"/>
    <property type="project" value="UniProtKB-SubCell"/>
</dbReference>
<dbReference type="GO" id="GO:0019871">
    <property type="term" value="F:sodium channel inhibitor activity"/>
    <property type="evidence" value="ECO:0007669"/>
    <property type="project" value="InterPro"/>
</dbReference>
<dbReference type="GO" id="GO:0090729">
    <property type="term" value="F:toxin activity"/>
    <property type="evidence" value="ECO:0007669"/>
    <property type="project" value="UniProtKB-KW"/>
</dbReference>
<dbReference type="CDD" id="cd23106">
    <property type="entry name" value="neurotoxins_LC_scorpion"/>
    <property type="match status" value="1"/>
</dbReference>
<dbReference type="Gene3D" id="3.30.30.10">
    <property type="entry name" value="Knottin, scorpion toxin-like"/>
    <property type="match status" value="1"/>
</dbReference>
<dbReference type="InterPro" id="IPR044062">
    <property type="entry name" value="LCN-type_CS_alpha_beta_dom"/>
</dbReference>
<dbReference type="InterPro" id="IPR036574">
    <property type="entry name" value="Scorpion_toxin-like_sf"/>
</dbReference>
<dbReference type="InterPro" id="IPR002061">
    <property type="entry name" value="Scorpion_toxinL/defensin"/>
</dbReference>
<dbReference type="Pfam" id="PF00537">
    <property type="entry name" value="Toxin_3"/>
    <property type="match status" value="1"/>
</dbReference>
<dbReference type="SUPFAM" id="SSF57095">
    <property type="entry name" value="Scorpion toxin-like"/>
    <property type="match status" value="1"/>
</dbReference>
<dbReference type="PROSITE" id="PS51863">
    <property type="entry name" value="LCN_CSAB"/>
    <property type="match status" value="1"/>
</dbReference>
<protein>
    <recommendedName>
        <fullName evidence="5">Putative sodium channel toxin Ts41</fullName>
    </recommendedName>
    <alternativeName>
        <fullName evidence="5">Putative NaTx</fullName>
    </alternativeName>
    <alternativeName>
        <fullName evidence="1">Putative lipolysis-activating peptide</fullName>
    </alternativeName>
    <alternativeName>
        <fullName evidence="6">Tityustoxin-41</fullName>
    </alternativeName>
</protein>
<reference evidence="8" key="1">
    <citation type="journal article" date="2021" name="Toxicon">
        <title>Novel components of Tityus serrulatus venom: a transcriptomic approach.</title>
        <authorList>
            <person name="Kalapothakis Y."/>
            <person name="Miranda K."/>
            <person name="Pereira A.H."/>
            <person name="Witt A.S.A."/>
            <person name="Marani C."/>
            <person name="Martins A.P."/>
            <person name="Leal H.G."/>
            <person name="Campos-Junior E."/>
            <person name="Pimenta A.M.C."/>
            <person name="Borges A."/>
            <person name="Chavez-Olortegui C."/>
            <person name="Kalapothakis E."/>
        </authorList>
    </citation>
    <scope>NUCLEOTIDE SEQUENCE [MRNA]</scope>
    <source>
        <tissue>Telson</tissue>
    </source>
</reference>
<keyword id="KW-1015">Disulfide bond</keyword>
<keyword id="KW-0872">Ion channel impairing toxin</keyword>
<keyword id="KW-0528">Neurotoxin</keyword>
<keyword id="KW-0964">Secreted</keyword>
<keyword id="KW-0732">Signal</keyword>
<keyword id="KW-0800">Toxin</keyword>
<keyword id="KW-0738">Voltage-gated sodium channel impairing toxin</keyword>
<accession>A0A7S8MVN3</accession>
<organism>
    <name type="scientific">Tityus serrulatus</name>
    <name type="common">Brazilian scorpion</name>
    <dbReference type="NCBI Taxonomy" id="6887"/>
    <lineage>
        <taxon>Eukaryota</taxon>
        <taxon>Metazoa</taxon>
        <taxon>Ecdysozoa</taxon>
        <taxon>Arthropoda</taxon>
        <taxon>Chelicerata</taxon>
        <taxon>Arachnida</taxon>
        <taxon>Scorpiones</taxon>
        <taxon>Buthida</taxon>
        <taxon>Buthoidea</taxon>
        <taxon>Buthidae</taxon>
        <taxon>Tityus</taxon>
    </lineage>
</organism>